<evidence type="ECO:0000256" key="1">
    <source>
        <dbReference type="SAM" id="MobiDB-lite"/>
    </source>
</evidence>
<accession>P02325</accession>
<sequence>PRRRRASSGRPVRRRRRPKMSRRRRRGGRRRR</sequence>
<comment type="function">
    <text>Protamines substitute for histones in the chromatin of sperm during the haploid phase of spermatogenesis. They compact sperm DNA into a highly condensed, stable and inactive complex.</text>
</comment>
<comment type="subcellular location">
    <subcellularLocation>
        <location>Nucleus</location>
    </subcellularLocation>
    <subcellularLocation>
        <location>Chromosome</location>
    </subcellularLocation>
</comment>
<comment type="tissue specificity">
    <text>Testis.</text>
</comment>
<comment type="miscellaneous">
    <text>The heterogeneity indicates the existence of other protamines.</text>
</comment>
<reference key="1">
    <citation type="journal article" date="1983" name="Eur. J. Biochem.">
        <title>Primary structure of protamine from the Northern pike Esox lucius.</title>
        <authorList>
            <person name="Speckert W."/>
            <person name="Kennedy B."/>
            <person name="Daisley S.L."/>
            <person name="Davies P."/>
        </authorList>
    </citation>
    <scope>PROTEIN SEQUENCE</scope>
</reference>
<dbReference type="PIR" id="A02667">
    <property type="entry name" value="YZPK1"/>
</dbReference>
<dbReference type="InParanoid" id="P02325"/>
<dbReference type="Proteomes" id="UP000265140">
    <property type="component" value="Unassembled WGS sequence"/>
</dbReference>
<dbReference type="GO" id="GO:0000786">
    <property type="term" value="C:nucleosome"/>
    <property type="evidence" value="ECO:0007669"/>
    <property type="project" value="UniProtKB-KW"/>
</dbReference>
<dbReference type="GO" id="GO:0005634">
    <property type="term" value="C:nucleus"/>
    <property type="evidence" value="ECO:0007669"/>
    <property type="project" value="UniProtKB-SubCell"/>
</dbReference>
<dbReference type="GO" id="GO:0003677">
    <property type="term" value="F:DNA binding"/>
    <property type="evidence" value="ECO:0007669"/>
    <property type="project" value="UniProtKB-KW"/>
</dbReference>
<dbReference type="GO" id="GO:0030154">
    <property type="term" value="P:cell differentiation"/>
    <property type="evidence" value="ECO:0007669"/>
    <property type="project" value="UniProtKB-KW"/>
</dbReference>
<dbReference type="GO" id="GO:0030261">
    <property type="term" value="P:chromosome condensation"/>
    <property type="evidence" value="ECO:0007669"/>
    <property type="project" value="UniProtKB-KW"/>
</dbReference>
<dbReference type="GO" id="GO:0007283">
    <property type="term" value="P:spermatogenesis"/>
    <property type="evidence" value="ECO:0007669"/>
    <property type="project" value="UniProtKB-KW"/>
</dbReference>
<keyword id="KW-0158">Chromosome</keyword>
<keyword id="KW-0217">Developmental protein</keyword>
<keyword id="KW-0221">Differentiation</keyword>
<keyword id="KW-0903">Direct protein sequencing</keyword>
<keyword id="KW-0226">DNA condensation</keyword>
<keyword id="KW-0238">DNA-binding</keyword>
<keyword id="KW-0544">Nucleosome core</keyword>
<keyword id="KW-0539">Nucleus</keyword>
<keyword id="KW-1185">Reference proteome</keyword>
<keyword id="KW-0744">Spermatogenesis</keyword>
<name>PRT1_ESOLU</name>
<organism>
    <name type="scientific">Esox lucius</name>
    <name type="common">Northern pike</name>
    <dbReference type="NCBI Taxonomy" id="8010"/>
    <lineage>
        <taxon>Eukaryota</taxon>
        <taxon>Metazoa</taxon>
        <taxon>Chordata</taxon>
        <taxon>Craniata</taxon>
        <taxon>Vertebrata</taxon>
        <taxon>Euteleostomi</taxon>
        <taxon>Actinopterygii</taxon>
        <taxon>Neopterygii</taxon>
        <taxon>Teleostei</taxon>
        <taxon>Protacanthopterygii</taxon>
        <taxon>Esociformes</taxon>
        <taxon>Esocidae</taxon>
        <taxon>Esox</taxon>
    </lineage>
</organism>
<protein>
    <recommendedName>
        <fullName>Protamine-1</fullName>
    </recommendedName>
    <alternativeName>
        <fullName>Protamine-I</fullName>
    </alternativeName>
</protein>
<proteinExistence type="evidence at protein level"/>
<feature type="peptide" id="PRO_0000044832" description="Protamine-1">
    <location>
        <begin position="1"/>
        <end position="32"/>
    </location>
</feature>
<feature type="region of interest" description="Disordered" evidence="1">
    <location>
        <begin position="1"/>
        <end position="32"/>
    </location>
</feature>
<feature type="sequence variant">
    <original>G</original>
    <variation>S</variation>
    <location>
        <position position="9"/>
    </location>
</feature>
<feature type="sequence variant" description="In 50% of the molecules.">
    <original>G</original>
    <variation>S</variation>
    <location>
        <position position="28"/>
    </location>
</feature>